<feature type="chain" id="PRO_0000253443" description="Uncharacterized protein R527">
    <location>
        <begin position="1"/>
        <end position="159"/>
    </location>
</feature>
<gene>
    <name type="ordered locus">MIMI_R527</name>
</gene>
<accession>Q5UQ95</accession>
<organismHost>
    <name type="scientific">Acanthamoeba polyphaga</name>
    <name type="common">Amoeba</name>
    <dbReference type="NCBI Taxonomy" id="5757"/>
</organismHost>
<proteinExistence type="predicted"/>
<protein>
    <recommendedName>
        <fullName>Uncharacterized protein R527</fullName>
    </recommendedName>
</protein>
<organism>
    <name type="scientific">Acanthamoeba polyphaga mimivirus</name>
    <name type="common">APMV</name>
    <dbReference type="NCBI Taxonomy" id="212035"/>
    <lineage>
        <taxon>Viruses</taxon>
        <taxon>Varidnaviria</taxon>
        <taxon>Bamfordvirae</taxon>
        <taxon>Nucleocytoviricota</taxon>
        <taxon>Megaviricetes</taxon>
        <taxon>Imitervirales</taxon>
        <taxon>Mimiviridae</taxon>
        <taxon>Megamimivirinae</taxon>
        <taxon>Mimivirus</taxon>
        <taxon>Mimivirus bradfordmassiliense</taxon>
    </lineage>
</organism>
<keyword id="KW-1185">Reference proteome</keyword>
<name>YR527_MIMIV</name>
<sequence length="159" mass="18414">MGVLEFFGTLLRNDITASSIMSDYKNKLPVNHLLMDFNSIVHVASQKIISDVNSFMQNVLTNLYQNRSLNTTLLNEQFTKYKMQHIQKRINNNTDPIEITKLFNNHFDDKFMDRLIITLVISVLLSIIRTYCTNETMKTLLIAIDGVPSKGKMIEQKQR</sequence>
<dbReference type="EMBL" id="AY653733">
    <property type="protein sequence ID" value="AAV50791.1"/>
    <property type="molecule type" value="Genomic_DNA"/>
</dbReference>
<dbReference type="SMR" id="Q5UQ95"/>
<dbReference type="Proteomes" id="UP000001134">
    <property type="component" value="Genome"/>
</dbReference>
<dbReference type="Gene3D" id="3.40.50.12390">
    <property type="match status" value="1"/>
</dbReference>
<reference key="1">
    <citation type="journal article" date="2004" name="Science">
        <title>The 1.2-megabase genome sequence of Mimivirus.</title>
        <authorList>
            <person name="Raoult D."/>
            <person name="Audic S."/>
            <person name="Robert C."/>
            <person name="Abergel C."/>
            <person name="Renesto P."/>
            <person name="Ogata H."/>
            <person name="La Scola B."/>
            <person name="Susan M."/>
            <person name="Claverie J.-M."/>
        </authorList>
    </citation>
    <scope>NUCLEOTIDE SEQUENCE [LARGE SCALE GENOMIC DNA]</scope>
    <source>
        <strain>Rowbotham-Bradford</strain>
    </source>
</reference>